<dbReference type="EMBL" id="CU329670">
    <property type="protein sequence ID" value="CAC05733.1"/>
    <property type="molecule type" value="Genomic_DNA"/>
</dbReference>
<dbReference type="EMBL" id="D89239">
    <property type="protein sequence ID" value="BAA13900.1"/>
    <property type="molecule type" value="mRNA"/>
</dbReference>
<dbReference type="PIR" id="T43145">
    <property type="entry name" value="T43145"/>
</dbReference>
<dbReference type="RefSeq" id="NP_594694.1">
    <property type="nucleotide sequence ID" value="NM_001020122.2"/>
</dbReference>
<dbReference type="SMR" id="Q9HGQ3"/>
<dbReference type="BioGRID" id="278720">
    <property type="interactions" value="45"/>
</dbReference>
<dbReference type="FunCoup" id="Q9HGQ3">
    <property type="interactions" value="200"/>
</dbReference>
<dbReference type="IntAct" id="Q9HGQ3">
    <property type="interactions" value="1"/>
</dbReference>
<dbReference type="STRING" id="284812.Q9HGQ3"/>
<dbReference type="iPTMnet" id="Q9HGQ3"/>
<dbReference type="PaxDb" id="4896-SPAC17D4.03c.1"/>
<dbReference type="EnsemblFungi" id="SPAC17D4.03c.1">
    <property type="protein sequence ID" value="SPAC17D4.03c.1:pep"/>
    <property type="gene ID" value="SPAC17D4.03c"/>
</dbReference>
<dbReference type="GeneID" id="2542250"/>
<dbReference type="KEGG" id="spo:2542250"/>
<dbReference type="PomBase" id="SPAC17D4.03c">
    <property type="gene designation" value="cis4"/>
</dbReference>
<dbReference type="VEuPathDB" id="FungiDB:SPAC17D4.03c"/>
<dbReference type="eggNOG" id="KOG1484">
    <property type="taxonomic scope" value="Eukaryota"/>
</dbReference>
<dbReference type="HOGENOM" id="CLU_385941_0_0_1"/>
<dbReference type="InParanoid" id="Q9HGQ3"/>
<dbReference type="OMA" id="HMAFDCI"/>
<dbReference type="PhylomeDB" id="Q9HGQ3"/>
<dbReference type="Reactome" id="R-SPO-264876">
    <property type="pathway name" value="Insulin processing"/>
</dbReference>
<dbReference type="Reactome" id="R-SPO-435368">
    <property type="pathway name" value="Zinc efflux and compartmentalization by the SLC30 family"/>
</dbReference>
<dbReference type="PRO" id="PR:Q9HGQ3"/>
<dbReference type="Proteomes" id="UP000002485">
    <property type="component" value="Chromosome I"/>
</dbReference>
<dbReference type="GO" id="GO:0031410">
    <property type="term" value="C:cytoplasmic vesicle"/>
    <property type="evidence" value="ECO:0000318"/>
    <property type="project" value="GO_Central"/>
</dbReference>
<dbReference type="GO" id="GO:0005789">
    <property type="term" value="C:endoplasmic reticulum membrane"/>
    <property type="evidence" value="ECO:0007669"/>
    <property type="project" value="UniProtKB-SubCell"/>
</dbReference>
<dbReference type="GO" id="GO:0005794">
    <property type="term" value="C:Golgi apparatus"/>
    <property type="evidence" value="ECO:0000318"/>
    <property type="project" value="GO_Central"/>
</dbReference>
<dbReference type="GO" id="GO:0000139">
    <property type="term" value="C:Golgi membrane"/>
    <property type="evidence" value="ECO:0000314"/>
    <property type="project" value="PomBase"/>
</dbReference>
<dbReference type="GO" id="GO:0005385">
    <property type="term" value="F:zinc ion transmembrane transporter activity"/>
    <property type="evidence" value="ECO:0000315"/>
    <property type="project" value="PomBase"/>
</dbReference>
<dbReference type="GO" id="GO:0006882">
    <property type="term" value="P:intracellular zinc ion homeostasis"/>
    <property type="evidence" value="ECO:0000314"/>
    <property type="project" value="PomBase"/>
</dbReference>
<dbReference type="GO" id="GO:1904257">
    <property type="term" value="P:zinc ion import into Golgi lumen"/>
    <property type="evidence" value="ECO:0000315"/>
    <property type="project" value="PomBase"/>
</dbReference>
<dbReference type="GO" id="GO:0062111">
    <property type="term" value="P:zinc ion import into organelle"/>
    <property type="evidence" value="ECO:0000314"/>
    <property type="project" value="PomBase"/>
</dbReference>
<dbReference type="Gene3D" id="1.20.1510.10">
    <property type="entry name" value="Cation efflux protein transmembrane domain"/>
    <property type="match status" value="2"/>
</dbReference>
<dbReference type="InterPro" id="IPR002524">
    <property type="entry name" value="Cation_efflux"/>
</dbReference>
<dbReference type="InterPro" id="IPR027469">
    <property type="entry name" value="Cation_efflux_TMD_sf"/>
</dbReference>
<dbReference type="InterPro" id="IPR045316">
    <property type="entry name" value="Msc2-like"/>
</dbReference>
<dbReference type="NCBIfam" id="TIGR01297">
    <property type="entry name" value="CDF"/>
    <property type="match status" value="1"/>
</dbReference>
<dbReference type="PANTHER" id="PTHR45755">
    <property type="match status" value="1"/>
</dbReference>
<dbReference type="PANTHER" id="PTHR45755:SF4">
    <property type="entry name" value="ZINC TRANSPORTER 7"/>
    <property type="match status" value="1"/>
</dbReference>
<dbReference type="Pfam" id="PF01545">
    <property type="entry name" value="Cation_efflux"/>
    <property type="match status" value="1"/>
</dbReference>
<dbReference type="SUPFAM" id="SSF161111">
    <property type="entry name" value="Cation efflux protein transmembrane domain-like"/>
    <property type="match status" value="1"/>
</dbReference>
<reference key="1">
    <citation type="journal article" date="2002" name="Nature">
        <title>The genome sequence of Schizosaccharomyces pombe.</title>
        <authorList>
            <person name="Wood V."/>
            <person name="Gwilliam R."/>
            <person name="Rajandream M.A."/>
            <person name="Lyne M.H."/>
            <person name="Lyne R."/>
            <person name="Stewart A."/>
            <person name="Sgouros J.G."/>
            <person name="Peat N."/>
            <person name="Hayles J."/>
            <person name="Baker S.G."/>
            <person name="Basham D."/>
            <person name="Bowman S."/>
            <person name="Brooks K."/>
            <person name="Brown D."/>
            <person name="Brown S."/>
            <person name="Chillingworth T."/>
            <person name="Churcher C.M."/>
            <person name="Collins M."/>
            <person name="Connor R."/>
            <person name="Cronin A."/>
            <person name="Davis P."/>
            <person name="Feltwell T."/>
            <person name="Fraser A."/>
            <person name="Gentles S."/>
            <person name="Goble A."/>
            <person name="Hamlin N."/>
            <person name="Harris D.E."/>
            <person name="Hidalgo J."/>
            <person name="Hodgson G."/>
            <person name="Holroyd S."/>
            <person name="Hornsby T."/>
            <person name="Howarth S."/>
            <person name="Huckle E.J."/>
            <person name="Hunt S."/>
            <person name="Jagels K."/>
            <person name="James K.D."/>
            <person name="Jones L."/>
            <person name="Jones M."/>
            <person name="Leather S."/>
            <person name="McDonald S."/>
            <person name="McLean J."/>
            <person name="Mooney P."/>
            <person name="Moule S."/>
            <person name="Mungall K.L."/>
            <person name="Murphy L.D."/>
            <person name="Niblett D."/>
            <person name="Odell C."/>
            <person name="Oliver K."/>
            <person name="O'Neil S."/>
            <person name="Pearson D."/>
            <person name="Quail M.A."/>
            <person name="Rabbinowitsch E."/>
            <person name="Rutherford K.M."/>
            <person name="Rutter S."/>
            <person name="Saunders D."/>
            <person name="Seeger K."/>
            <person name="Sharp S."/>
            <person name="Skelton J."/>
            <person name="Simmonds M.N."/>
            <person name="Squares R."/>
            <person name="Squares S."/>
            <person name="Stevens K."/>
            <person name="Taylor K."/>
            <person name="Taylor R.G."/>
            <person name="Tivey A."/>
            <person name="Walsh S.V."/>
            <person name="Warren T."/>
            <person name="Whitehead S."/>
            <person name="Woodward J.R."/>
            <person name="Volckaert G."/>
            <person name="Aert R."/>
            <person name="Robben J."/>
            <person name="Grymonprez B."/>
            <person name="Weltjens I."/>
            <person name="Vanstreels E."/>
            <person name="Rieger M."/>
            <person name="Schaefer M."/>
            <person name="Mueller-Auer S."/>
            <person name="Gabel C."/>
            <person name="Fuchs M."/>
            <person name="Duesterhoeft A."/>
            <person name="Fritzc C."/>
            <person name="Holzer E."/>
            <person name="Moestl D."/>
            <person name="Hilbert H."/>
            <person name="Borzym K."/>
            <person name="Langer I."/>
            <person name="Beck A."/>
            <person name="Lehrach H."/>
            <person name="Reinhardt R."/>
            <person name="Pohl T.M."/>
            <person name="Eger P."/>
            <person name="Zimmermann W."/>
            <person name="Wedler H."/>
            <person name="Wambutt R."/>
            <person name="Purnelle B."/>
            <person name="Goffeau A."/>
            <person name="Cadieu E."/>
            <person name="Dreano S."/>
            <person name="Gloux S."/>
            <person name="Lelaure V."/>
            <person name="Mottier S."/>
            <person name="Galibert F."/>
            <person name="Aves S.J."/>
            <person name="Xiang Z."/>
            <person name="Hunt C."/>
            <person name="Moore K."/>
            <person name="Hurst S.M."/>
            <person name="Lucas M."/>
            <person name="Rochet M."/>
            <person name="Gaillardin C."/>
            <person name="Tallada V.A."/>
            <person name="Garzon A."/>
            <person name="Thode G."/>
            <person name="Daga R.R."/>
            <person name="Cruzado L."/>
            <person name="Jimenez J."/>
            <person name="Sanchez M."/>
            <person name="del Rey F."/>
            <person name="Benito J."/>
            <person name="Dominguez A."/>
            <person name="Revuelta J.L."/>
            <person name="Moreno S."/>
            <person name="Armstrong J."/>
            <person name="Forsburg S.L."/>
            <person name="Cerutti L."/>
            <person name="Lowe T."/>
            <person name="McCombie W.R."/>
            <person name="Paulsen I."/>
            <person name="Potashkin J."/>
            <person name="Shpakovski G.V."/>
            <person name="Ussery D."/>
            <person name="Barrell B.G."/>
            <person name="Nurse P."/>
        </authorList>
    </citation>
    <scope>NUCLEOTIDE SEQUENCE [LARGE SCALE GENOMIC DNA]</scope>
    <source>
        <strain>972 / ATCC 24843</strain>
    </source>
</reference>
<reference key="2">
    <citation type="journal article" date="1997" name="DNA Res.">
        <title>Identification of open reading frames in Schizosaccharomyces pombe cDNAs.</title>
        <authorList>
            <person name="Yoshioka S."/>
            <person name="Kato K."/>
            <person name="Nakai K."/>
            <person name="Okayama H."/>
            <person name="Nojima H."/>
        </authorList>
    </citation>
    <scope>NUCLEOTIDE SEQUENCE [LARGE SCALE MRNA] OF 377-732</scope>
    <source>
        <strain>PR745</strain>
    </source>
</reference>
<reference key="3">
    <citation type="journal article" date="2006" name="Nat. Biotechnol.">
        <title>ORFeome cloning and global analysis of protein localization in the fission yeast Schizosaccharomyces pombe.</title>
        <authorList>
            <person name="Matsuyama A."/>
            <person name="Arai R."/>
            <person name="Yashiroda Y."/>
            <person name="Shirai A."/>
            <person name="Kamata A."/>
            <person name="Sekido S."/>
            <person name="Kobayashi Y."/>
            <person name="Hashimoto A."/>
            <person name="Hamamoto M."/>
            <person name="Hiraoka Y."/>
            <person name="Horinouchi S."/>
            <person name="Yoshida M."/>
        </authorList>
    </citation>
    <scope>SUBCELLULAR LOCATION [LARGE SCALE ANALYSIS]</scope>
</reference>
<reference key="4">
    <citation type="journal article" date="2008" name="Mol. Biol. Cell">
        <title>Cation diffusion facilitator Cis4 is implicated in Golgi membrane trafficking via regulating zinc homeostasis in fission yeast.</title>
        <authorList>
            <person name="Fang Y."/>
            <person name="Sugiura R."/>
            <person name="Ma Y."/>
            <person name="Yada-Matsushima T."/>
            <person name="Umeno H."/>
            <person name="Kuno T."/>
        </authorList>
    </citation>
    <scope>FUNCTION</scope>
    <scope>MUTAGENESIS OF GLY-375 AND GLY-393</scope>
    <scope>SUBCELLULAR LOCATION</scope>
    <scope>INTERACTION WITH ZRG17</scope>
</reference>
<name>CIS4_SCHPO</name>
<organism>
    <name type="scientific">Schizosaccharomyces pombe (strain 972 / ATCC 24843)</name>
    <name type="common">Fission yeast</name>
    <dbReference type="NCBI Taxonomy" id="284812"/>
    <lineage>
        <taxon>Eukaryota</taxon>
        <taxon>Fungi</taxon>
        <taxon>Dikarya</taxon>
        <taxon>Ascomycota</taxon>
        <taxon>Taphrinomycotina</taxon>
        <taxon>Schizosaccharomycetes</taxon>
        <taxon>Schizosaccharomycetales</taxon>
        <taxon>Schizosaccharomycetaceae</taxon>
        <taxon>Schizosaccharomyces</taxon>
    </lineage>
</organism>
<proteinExistence type="evidence at protein level"/>
<protein>
    <recommendedName>
        <fullName>Probable zinc transporter cis4</fullName>
    </recommendedName>
</protein>
<comment type="function">
    <text evidence="3">Probable zinc transporter involved in Golgi membrane trafficking through the regulation of zinc homeostasis.</text>
</comment>
<comment type="subunit">
    <text evidence="3">Interacts with zrg17.</text>
</comment>
<comment type="subcellular location">
    <subcellularLocation>
        <location>Endoplasmic reticulum membrane</location>
        <topology>Multi-pass membrane protein</topology>
    </subcellularLocation>
    <subcellularLocation>
        <location>Golgi apparatus</location>
        <location>cis-Golgi network membrane</location>
        <topology>Multi-pass membrane protein</topology>
    </subcellularLocation>
</comment>
<comment type="similarity">
    <text evidence="4">Belongs to the cation diffusion facilitator (CDF) transporter (TC 2.A.4) family. SLC30A subfamily.</text>
</comment>
<gene>
    <name type="primary">cis4</name>
    <name type="ORF">SPAC17D4.03c</name>
</gene>
<keyword id="KW-0256">Endoplasmic reticulum</keyword>
<keyword id="KW-0333">Golgi apparatus</keyword>
<keyword id="KW-0406">Ion transport</keyword>
<keyword id="KW-0472">Membrane</keyword>
<keyword id="KW-1185">Reference proteome</keyword>
<keyword id="KW-0812">Transmembrane</keyword>
<keyword id="KW-1133">Transmembrane helix</keyword>
<keyword id="KW-0813">Transport</keyword>
<keyword id="KW-0862">Zinc</keyword>
<keyword id="KW-0864">Zinc transport</keyword>
<evidence type="ECO:0000255" key="1"/>
<evidence type="ECO:0000256" key="2">
    <source>
        <dbReference type="SAM" id="MobiDB-lite"/>
    </source>
</evidence>
<evidence type="ECO:0000269" key="3">
    <source>
    </source>
</evidence>
<evidence type="ECO:0000305" key="4"/>
<accession>Q9HGQ3</accession>
<accession>P78888</accession>
<feature type="chain" id="PRO_0000206116" description="Probable zinc transporter cis4">
    <location>
        <begin position="1"/>
        <end position="732"/>
    </location>
</feature>
<feature type="transmembrane region" description="Helical" evidence="1">
    <location>
        <begin position="52"/>
        <end position="72"/>
    </location>
</feature>
<feature type="transmembrane region" description="Helical" evidence="1">
    <location>
        <begin position="79"/>
        <end position="99"/>
    </location>
</feature>
<feature type="transmembrane region" description="Helical" evidence="1">
    <location>
        <begin position="111"/>
        <end position="131"/>
    </location>
</feature>
<feature type="transmembrane region" description="Helical" evidence="1">
    <location>
        <begin position="163"/>
        <end position="183"/>
    </location>
</feature>
<feature type="transmembrane region" description="Helical" evidence="1">
    <location>
        <begin position="189"/>
        <end position="209"/>
    </location>
</feature>
<feature type="transmembrane region" description="Helical" evidence="1">
    <location>
        <begin position="219"/>
        <end position="239"/>
    </location>
</feature>
<feature type="transmembrane region" description="Helical" evidence="1">
    <location>
        <begin position="240"/>
        <end position="260"/>
    </location>
</feature>
<feature type="transmembrane region" description="Helical" evidence="1">
    <location>
        <begin position="268"/>
        <end position="288"/>
    </location>
</feature>
<feature type="transmembrane region" description="Helical" evidence="1">
    <location>
        <begin position="350"/>
        <end position="370"/>
    </location>
</feature>
<feature type="transmembrane region" description="Helical" evidence="1">
    <location>
        <begin position="380"/>
        <end position="400"/>
    </location>
</feature>
<feature type="transmembrane region" description="Helical" evidence="1">
    <location>
        <begin position="415"/>
        <end position="435"/>
    </location>
</feature>
<feature type="transmembrane region" description="Helical" evidence="1">
    <location>
        <begin position="453"/>
        <end position="473"/>
    </location>
</feature>
<feature type="transmembrane region" description="Helical" evidence="1">
    <location>
        <begin position="586"/>
        <end position="606"/>
    </location>
</feature>
<feature type="transmembrane region" description="Helical" evidence="1">
    <location>
        <begin position="615"/>
        <end position="635"/>
    </location>
</feature>
<feature type="region of interest" description="Disordered" evidence="2">
    <location>
        <begin position="526"/>
        <end position="547"/>
    </location>
</feature>
<feature type="mutagenesis site" description="In cis4-1; confers sensitivities to the calcineurin inhibitor FK506 and to a high concentration of MgCl2." evidence="3">
    <original>G</original>
    <variation>E</variation>
    <location>
        <position position="375"/>
    </location>
</feature>
<feature type="mutagenesis site" description="In cis4-2; confers sensitivities to the calcineurin inhibitor FK506 and to a high concentration of MgCl2." evidence="3">
    <original>G</original>
    <variation>D</variation>
    <location>
        <position position="393"/>
    </location>
</feature>
<feature type="sequence conflict" description="In Ref. 2; BAA13900." evidence="4" ref="2">
    <original>L</original>
    <variation>S</variation>
    <location>
        <position position="618"/>
    </location>
</feature>
<feature type="sequence conflict" description="In Ref. 2; BAA13900." evidence="4" ref="2">
    <original>N</original>
    <variation>H</variation>
    <location>
        <position position="665"/>
    </location>
</feature>
<feature type="sequence conflict" description="In Ref. 2; BAA13900." evidence="4" ref="2">
    <original>I</original>
    <variation>V</variation>
    <location>
        <position position="668"/>
    </location>
</feature>
<sequence>MNVNSSAFERTNRFPSFPVLKDDQKTSSDSIAAAKKKDLLSLISSKSLLSSETLGWFSVICAFSITGSGLEVNTMSIPFYLIFGIFAFVSFTTQYLGIYSFSFQPFQLLNVIIASLSMVFITLGAFVLGTLDTTCLLLLAFKLFFIRNDPTPFNARSANLKNYIAFPICLFVINHILILLGYFQCSYSVFYASVFYILLGVFIRVFYLVNKEKFEKKELAFLFSSIVVACLIQFNVLPLGTINLSVTRFTILCFMQIFCINWDGIARIQFYLGKFDISLIMALISAIINKTASQNSIKIISCLYQVGFCFFKIGSSITANLKLPDNSRIYRLYNDFIVNGVLADKESRSIFYFFLLNVSYMFVQVIYGLWTNSLGLISDAIHMAFDCIAILVGLVATTLAKMPLNYAYPFGFAKIEALSGFTNGIFLVLISFSIVGEALYRLFHPPQMNTDQLLLVSFLGLVVNLVGILAFNHGHNHDHGSHHHHSHSNHSMCLPNTTNDINIFEEFEEEKDNVEAQKMGYTNDDHVSQHEHTHENSQEHHHEHNHNHDHIHKYNEKCDHESISLQNLDNDHHCHHHHENHNMHGIFLHIIADTMGSVGVIVSTILIQWFSWTGFDPLASLIIAALIFVSVLPLIKDSAKNLLSVTDPESEYLLKQCLSNISLSNSVISLSNPKFWTNERGEVYGILHIQVSIDGDLNVVRNEVFRKLSIAVPNLKHICIQSERPNNCWCGK</sequence>